<reference key="1">
    <citation type="journal article" date="1989" name="Nucleic Acids Res.">
        <title>The nucleotide sequence and reading frames of a mutant hepatitis B virus subtype adr.</title>
        <authorList>
            <person name="Rho H.M."/>
            <person name="Kim K."/>
            <person name="Hyun S.W."/>
            <person name="Kim Y.S."/>
        </authorList>
    </citation>
    <scope>NUCLEOTIDE SEQUENCE [GENOMIC RNA]</scope>
</reference>
<proteinExistence type="inferred from homology"/>
<feature type="chain" id="PRO_0000324752" description="Putative X-Core fused protein">
    <location>
        <begin position="1"/>
        <end position="359"/>
    </location>
</feature>
<feature type="region of interest" description="Disordered" evidence="1">
    <location>
        <begin position="25"/>
        <end position="48"/>
    </location>
</feature>
<feature type="region of interest" description="Disordered" evidence="1">
    <location>
        <begin position="312"/>
        <end position="359"/>
    </location>
</feature>
<feature type="compositionally biased region" description="Basic residues" evidence="1">
    <location>
        <begin position="325"/>
        <end position="352"/>
    </location>
</feature>
<organismHost>
    <name type="scientific">Homo sapiens</name>
    <name type="common">Human</name>
    <dbReference type="NCBI Taxonomy" id="9606"/>
</organismHost>
<organismHost>
    <name type="scientific">Pan troglodytes</name>
    <name type="common">Chimpanzee</name>
    <dbReference type="NCBI Taxonomy" id="9598"/>
</organismHost>
<sequence length="359" mass="40201">MAARVCCQLDPARDVLCLRPVGAESRGRPVSRPFGPHPSPSSSAVPADHGAHLSLRGLPVCAFSSAGPCALRFTSARRMETTVNADQVLPKVLHKRTLGLSAMSTSDLEAYFKDCLFKDWEDLGEEIRLMIFVLGGCRHKLVCSPAPCNFFHLCLIISCSCPTVHASKLCLGWLWGMDIDPYKEFGASVELLSFLPSDFFPSIRDLLDTASALYREALESPEHCSPHHTALRQAILCWGELMNLATWVGSNLEDPASRELVVSYVNVNMGLKIRQLLWFHISCLTFGRETVLEYLVSFGVWIRTPPAYRPPNAPILSTLPETTVVRRRGRSPRRRTPSPRRRRSESPRRRRSQSRESQC</sequence>
<dbReference type="EMBL" id="X14193">
    <property type="protein sequence ID" value="CAA32402.1"/>
    <property type="molecule type" value="Genomic_DNA"/>
</dbReference>
<dbReference type="PIR" id="S04570">
    <property type="entry name" value="S04570"/>
</dbReference>
<dbReference type="SMR" id="Q67863"/>
<dbReference type="Proteomes" id="UP000007924">
    <property type="component" value="Genome"/>
</dbReference>
<dbReference type="GO" id="GO:0043657">
    <property type="term" value="C:host cell"/>
    <property type="evidence" value="ECO:0007669"/>
    <property type="project" value="GOC"/>
</dbReference>
<dbReference type="GO" id="GO:0033650">
    <property type="term" value="C:host cell mitochondrion"/>
    <property type="evidence" value="ECO:0007669"/>
    <property type="project" value="UniProtKB-UniRule"/>
</dbReference>
<dbReference type="GO" id="GO:0042025">
    <property type="term" value="C:host cell nucleus"/>
    <property type="evidence" value="ECO:0007669"/>
    <property type="project" value="UniProtKB-UniRule"/>
</dbReference>
<dbReference type="GO" id="GO:0039619">
    <property type="term" value="C:T=4 icosahedral viral capsid"/>
    <property type="evidence" value="ECO:0007669"/>
    <property type="project" value="UniProtKB-UniRule"/>
</dbReference>
<dbReference type="GO" id="GO:0003677">
    <property type="term" value="F:DNA binding"/>
    <property type="evidence" value="ECO:0007669"/>
    <property type="project" value="UniProtKB-UniRule"/>
</dbReference>
<dbReference type="GO" id="GO:0003723">
    <property type="term" value="F:RNA binding"/>
    <property type="evidence" value="ECO:0007669"/>
    <property type="project" value="UniProtKB-UniRule"/>
</dbReference>
<dbReference type="GO" id="GO:0005198">
    <property type="term" value="F:structural molecule activity"/>
    <property type="evidence" value="ECO:0007669"/>
    <property type="project" value="UniProtKB-UniRule"/>
</dbReference>
<dbReference type="GO" id="GO:0006351">
    <property type="term" value="P:DNA-templated transcription"/>
    <property type="evidence" value="ECO:0007669"/>
    <property type="project" value="UniProtKB-UniRule"/>
</dbReference>
<dbReference type="GO" id="GO:0075521">
    <property type="term" value="P:microtubule-dependent intracellular transport of viral material towards nucleus"/>
    <property type="evidence" value="ECO:0007669"/>
    <property type="project" value="UniProtKB-UniRule"/>
</dbReference>
<dbReference type="GO" id="GO:0046718">
    <property type="term" value="P:symbiont entry into host cell"/>
    <property type="evidence" value="ECO:0007669"/>
    <property type="project" value="UniProtKB-UniRule"/>
</dbReference>
<dbReference type="GO" id="GO:0085033">
    <property type="term" value="P:symbiont-mediated activation of host NF-kappaB cascade"/>
    <property type="evidence" value="ECO:0007669"/>
    <property type="project" value="UniProtKB-UniRule"/>
</dbReference>
<dbReference type="GO" id="GO:0039592">
    <property type="term" value="P:symbiont-mediated arrest of host cell cycle during G2/M transition"/>
    <property type="evidence" value="ECO:0007669"/>
    <property type="project" value="UniProtKB-UniRule"/>
</dbReference>
<dbReference type="GO" id="GO:0019079">
    <property type="term" value="P:viral genome replication"/>
    <property type="evidence" value="ECO:0007669"/>
    <property type="project" value="UniProtKB-UniRule"/>
</dbReference>
<dbReference type="GO" id="GO:0075732">
    <property type="term" value="P:viral penetration into host nucleus"/>
    <property type="evidence" value="ECO:0007669"/>
    <property type="project" value="UniProtKB-UniRule"/>
</dbReference>
<dbReference type="FunFam" id="1.10.4090.10:FF:000001">
    <property type="entry name" value="Capsid protein"/>
    <property type="match status" value="1"/>
</dbReference>
<dbReference type="Gene3D" id="1.10.4090.10">
    <property type="entry name" value="Viral capsid, core domain supefamily, Hepatitis B virus"/>
    <property type="match status" value="1"/>
</dbReference>
<dbReference type="HAMAP" id="MF_04076">
    <property type="entry name" value="HBV_HBEAG"/>
    <property type="match status" value="1"/>
</dbReference>
<dbReference type="HAMAP" id="MF_04074">
    <property type="entry name" value="HBV_X"/>
    <property type="match status" value="1"/>
</dbReference>
<dbReference type="InterPro" id="IPR013195">
    <property type="entry name" value="Hepatitis_B_virus_capsid_N"/>
</dbReference>
<dbReference type="InterPro" id="IPR002006">
    <property type="entry name" value="Hepatitis_core"/>
</dbReference>
<dbReference type="InterPro" id="IPR000236">
    <property type="entry name" value="Transactivation_prot_X"/>
</dbReference>
<dbReference type="InterPro" id="IPR036459">
    <property type="entry name" value="Viral_capsid_core_dom_sf_HBV"/>
</dbReference>
<dbReference type="Pfam" id="PF08290">
    <property type="entry name" value="Hep_core_N"/>
    <property type="match status" value="1"/>
</dbReference>
<dbReference type="Pfam" id="PF00906">
    <property type="entry name" value="Hepatitis_core"/>
    <property type="match status" value="3"/>
</dbReference>
<dbReference type="Pfam" id="PF00739">
    <property type="entry name" value="X"/>
    <property type="match status" value="1"/>
</dbReference>
<dbReference type="SUPFAM" id="SSF47852">
    <property type="entry name" value="Hepatitis B viral capsid (hbcag)"/>
    <property type="match status" value="1"/>
</dbReference>
<keyword id="KW-0024">Alternative initiation</keyword>
<comment type="alternative products">
    <event type="alternative initiation"/>
    <isoform>
        <id>Q67863-1</id>
        <name>X-Core fused protein</name>
        <sequence type="displayed"/>
    </isoform>
    <isoform>
        <id>P0C6H6-1</id>
        <name>Capsid protein</name>
        <sequence type="external"/>
    </isoform>
</comment>
<comment type="caution">
    <text evidence="2">One nucleotide addition (T) at position 1821 changed the reading frame of the known B gene by erasing the stop codon and consequently fusing the B gene with C gene.</text>
</comment>
<organism>
    <name type="scientific">Hepatitis B virus genotype C subtype adr (isolate Korea/Kim/1989)</name>
    <name type="common">HBV-C</name>
    <dbReference type="NCBI Taxonomy" id="31512"/>
    <lineage>
        <taxon>Viruses</taxon>
        <taxon>Riboviria</taxon>
        <taxon>Pararnavirae</taxon>
        <taxon>Artverviricota</taxon>
        <taxon>Revtraviricetes</taxon>
        <taxon>Blubervirales</taxon>
        <taxon>Hepadnaviridae</taxon>
        <taxon>Orthohepadnavirus</taxon>
        <taxon>Hepatitis B virus</taxon>
    </lineage>
</organism>
<name>XCORE_HBVC4</name>
<protein>
    <recommendedName>
        <fullName>Putative X-Core fused protein</fullName>
    </recommendedName>
</protein>
<accession>Q67863</accession>
<evidence type="ECO:0000256" key="1">
    <source>
        <dbReference type="SAM" id="MobiDB-lite"/>
    </source>
</evidence>
<evidence type="ECO:0000305" key="2"/>